<proteinExistence type="evidence at protein level"/>
<keyword id="KW-0175">Coiled coil</keyword>
<keyword id="KW-0496">Mitochondrion</keyword>
<keyword id="KW-1267">Proteomics identification</keyword>
<keyword id="KW-1185">Reference proteome</keyword>
<keyword id="KW-0809">Transit peptide</keyword>
<feature type="transit peptide" description="Mitochondrion" evidence="1">
    <location>
        <begin position="1"/>
        <end position="24"/>
    </location>
</feature>
<feature type="chain" id="PRO_0000021657" description="Mitochondrial coiled-coil domain protein 1">
    <location>
        <begin position="25"/>
        <end position="119"/>
    </location>
</feature>
<feature type="region of interest" description="Disordered" evidence="2">
    <location>
        <begin position="25"/>
        <end position="65"/>
    </location>
</feature>
<feature type="coiled-coil region" evidence="1">
    <location>
        <begin position="62"/>
        <end position="116"/>
    </location>
</feature>
<feature type="compositionally biased region" description="Polar residues" evidence="2">
    <location>
        <begin position="31"/>
        <end position="52"/>
    </location>
</feature>
<feature type="sequence variant" id="VAR_017161" description="In dbSNP:rs2259435." evidence="4">
    <original>E</original>
    <variation>K</variation>
    <location>
        <position position="42"/>
    </location>
</feature>
<feature type="sequence variant" id="VAR_017162" description="In dbSNP:rs3093983." evidence="3 4 5">
    <original>S</original>
    <variation>N</variation>
    <location>
        <position position="45"/>
    </location>
</feature>
<feature type="sequence variant" id="VAR_017163" description="In dbSNP:rs78957773." evidence="3">
    <original>T</original>
    <variation>M</variation>
    <location>
        <position position="53"/>
    </location>
</feature>
<comment type="interaction">
    <interactant intactId="EBI-11987923">
        <id>P59942</id>
    </interactant>
    <interactant intactId="EBI-741753">
        <id>Q00994</id>
        <label>BEX3</label>
    </interactant>
    <organismsDiffer>false</organismsDiffer>
    <experiments>3</experiments>
</comment>
<comment type="interaction">
    <interactant intactId="EBI-11987923">
        <id>P59942</id>
    </interactant>
    <interactant intactId="EBI-10229433">
        <id>Q13515</id>
        <label>BFSP2</label>
    </interactant>
    <organismsDiffer>false</organismsDiffer>
    <experiments>3</experiments>
</comment>
<comment type="interaction">
    <interactant intactId="EBI-11987923">
        <id>P59942</id>
    </interactant>
    <interactant intactId="EBI-306905">
        <id>Q9Y376</id>
        <label>CAB39</label>
    </interactant>
    <organismsDiffer>false</organismsDiffer>
    <experiments>3</experiments>
</comment>
<comment type="interaction">
    <interactant intactId="EBI-11987923">
        <id>P59942</id>
    </interactant>
    <interactant intactId="EBI-1053725">
        <id>P10606</id>
        <label>COX5B</label>
    </interactant>
    <organismsDiffer>false</organismsDiffer>
    <experiments>3</experiments>
</comment>
<comment type="interaction">
    <interactant intactId="EBI-11987923">
        <id>P59942</id>
    </interactant>
    <interactant intactId="EBI-11962928">
        <id>Q9UI47-2</id>
        <label>CTNNA3</label>
    </interactant>
    <organismsDiffer>false</organismsDiffer>
    <experiments>3</experiments>
</comment>
<comment type="interaction">
    <interactant intactId="EBI-11987923">
        <id>P59942</id>
    </interactant>
    <interactant intactId="EBI-10242151">
        <id>Q53EP0-3</id>
        <label>FNDC3B</label>
    </interactant>
    <organismsDiffer>false</organismsDiffer>
    <experiments>3</experiments>
</comment>
<comment type="interaction">
    <interactant intactId="EBI-11987923">
        <id>P59942</id>
    </interactant>
    <interactant intactId="EBI-2556193">
        <id>Q63ZY3</id>
        <label>KANK2</label>
    </interactant>
    <organismsDiffer>false</organismsDiffer>
    <experiments>3</experiments>
</comment>
<comment type="interaction">
    <interactant intactId="EBI-11987923">
        <id>P59942</id>
    </interactant>
    <interactant intactId="EBI-12084444">
        <id>Q7Z3Y9</id>
        <label>KRT26</label>
    </interactant>
    <organismsDiffer>false</organismsDiffer>
    <experiments>3</experiments>
</comment>
<comment type="interaction">
    <interactant intactId="EBI-11987923">
        <id>P59942</id>
    </interactant>
    <interactant intactId="EBI-12351611">
        <id>Q16719-2</id>
        <label>KYNU</label>
    </interactant>
    <organismsDiffer>false</organismsDiffer>
    <experiments>3</experiments>
</comment>
<comment type="interaction">
    <interactant intactId="EBI-11987923">
        <id>P59942</id>
    </interactant>
    <interactant intactId="EBI-2798728">
        <id>P61968</id>
        <label>LMO4</label>
    </interactant>
    <organismsDiffer>false</organismsDiffer>
    <experiments>3</experiments>
</comment>
<comment type="interaction">
    <interactant intactId="EBI-11987923">
        <id>P59942</id>
    </interactant>
    <interactant intactId="EBI-347619">
        <id>O15116</id>
        <label>LSM1</label>
    </interactant>
    <organismsDiffer>false</organismsDiffer>
    <experiments>3</experiments>
</comment>
<comment type="interaction">
    <interactant intactId="EBI-11987923">
        <id>P59942</id>
    </interactant>
    <interactant intactId="EBI-8025850">
        <id>O14770-4</id>
        <label>MEIS2</label>
    </interactant>
    <organismsDiffer>false</organismsDiffer>
    <experiments>3</experiments>
</comment>
<comment type="interaction">
    <interactant intactId="EBI-11987923">
        <id>P59942</id>
    </interactant>
    <interactant intactId="EBI-2340269">
        <id>Q13064</id>
        <label>MKRN3</label>
    </interactant>
    <organismsDiffer>false</organismsDiffer>
    <experiments>3</experiments>
</comment>
<comment type="interaction">
    <interactant intactId="EBI-11987923">
        <id>P59942</id>
    </interactant>
    <interactant intactId="EBI-929476">
        <id>P20591</id>
        <label>MX1</label>
    </interactant>
    <organismsDiffer>false</organismsDiffer>
    <experiments>6</experiments>
</comment>
<comment type="interaction">
    <interactant intactId="EBI-11987923">
        <id>P59942</id>
    </interactant>
    <interactant intactId="EBI-10222416">
        <id>Q01449</id>
        <label>MYL7</label>
    </interactant>
    <organismsDiffer>false</organismsDiffer>
    <experiments>3</experiments>
</comment>
<comment type="interaction">
    <interactant intactId="EBI-11987923">
        <id>P59942</id>
    </interactant>
    <interactant intactId="EBI-10181968">
        <id>Q7Z4N8</id>
        <label>P4HA3</label>
    </interactant>
    <organismsDiffer>false</organismsDiffer>
    <experiments>3</experiments>
</comment>
<comment type="interaction">
    <interactant intactId="EBI-11987923">
        <id>P59942</id>
    </interactant>
    <interactant intactId="EBI-10232538">
        <id>Q8WWB5</id>
        <label>PIH1D2</label>
    </interactant>
    <organismsDiffer>false</organismsDiffer>
    <experiments>3</experiments>
</comment>
<comment type="interaction">
    <interactant intactId="EBI-11987923">
        <id>P59942</id>
    </interactant>
    <interactant intactId="EBI-710402">
        <id>Q96I34</id>
        <label>PPP1R16A</label>
    </interactant>
    <organismsDiffer>false</organismsDiffer>
    <experiments>3</experiments>
</comment>
<comment type="interaction">
    <interactant intactId="EBI-11987923">
        <id>P59942</id>
    </interactant>
    <interactant intactId="EBI-11986293">
        <id>P0CG20</id>
        <label>PRR35</label>
    </interactant>
    <organismsDiffer>false</organismsDiffer>
    <experiments>3</experiments>
</comment>
<comment type="interaction">
    <interactant intactId="EBI-11987923">
        <id>P59942</id>
    </interactant>
    <interactant intactId="EBI-347462">
        <id>P47897</id>
        <label>QARS1</label>
    </interactant>
    <organismsDiffer>false</organismsDiffer>
    <experiments>3</experiments>
</comment>
<comment type="interaction">
    <interactant intactId="EBI-11987923">
        <id>P59942</id>
    </interactant>
    <interactant intactId="EBI-10226430">
        <id>Q0D2K3</id>
        <label>RIPPLY1</label>
    </interactant>
    <organismsDiffer>false</organismsDiffer>
    <experiments>3</experiments>
</comment>
<comment type="interaction">
    <interactant intactId="EBI-11987923">
        <id>P59942</id>
    </interactant>
    <interactant intactId="EBI-739895">
        <id>Q8N6Y0</id>
        <label>USHBP1</label>
    </interactant>
    <organismsDiffer>false</organismsDiffer>
    <experiments>3</experiments>
</comment>
<comment type="interaction">
    <interactant intactId="EBI-11987923">
        <id>P59942</id>
    </interactant>
    <interactant intactId="EBI-2511991">
        <id>Q9Y2K6</id>
        <label>USP20</label>
    </interactant>
    <organismsDiffer>false</organismsDiffer>
    <experiments>3</experiments>
</comment>
<comment type="interaction">
    <interactant intactId="EBI-11987923">
        <id>P59942</id>
    </interactant>
    <interactant intactId="EBI-740727">
        <id>Q8TAU3</id>
        <label>ZNF417</label>
    </interactant>
    <organismsDiffer>false</organismsDiffer>
    <experiments>3</experiments>
</comment>
<comment type="interaction">
    <interactant intactId="EBI-11987923">
        <id>P59942</id>
    </interactant>
    <interactant intactId="EBI-6427977">
        <id>Q96SQ5</id>
        <label>ZNF587</label>
    </interactant>
    <organismsDiffer>false</organismsDiffer>
    <experiments>3</experiments>
</comment>
<comment type="interaction">
    <interactant intactId="EBI-11987923">
        <id>P59942</id>
    </interactant>
    <interactant intactId="EBI-12834294">
        <id>Q7L2R6-2</id>
        <label>ZNF765</label>
    </interactant>
    <organismsDiffer>false</organismsDiffer>
    <experiments>3</experiments>
</comment>
<comment type="subcellular location">
    <subcellularLocation>
        <location evidence="3">Mitochondrion</location>
    </subcellularLocation>
</comment>
<comment type="tissue specificity">
    <text evidence="3">Widely expressed. Expressed in adult and fetal liver, kidney and lung. Expressed in fetal brain. Weakly expressed in fetal spleen.</text>
</comment>
<accession>P59942</accession>
<accession>A2AB29</accession>
<accession>A2RUP7</accession>
<accession>B0UZB2</accession>
<accession>Q7RTY2</accession>
<reference key="1">
    <citation type="journal article" date="2003" name="Gene">
        <title>A novel gene encoding a coiled-coil mitochondrial protein located at the telomeric end of the human MHC Class III region.</title>
        <authorList>
            <person name="Semple J.I."/>
            <person name="Ribas G."/>
            <person name="Hillyard G."/>
            <person name="Brown S.E."/>
            <person name="Sanderson C.M."/>
            <person name="Campbell R.D."/>
        </authorList>
    </citation>
    <scope>NUCLEOTIDE SEQUENCE [MRNA]</scope>
    <scope>SUBCELLULAR LOCATION</scope>
    <scope>TISSUE SPECIFICITY</scope>
    <scope>VARIANTS ASN-45 AND MET-53</scope>
    <source>
        <tissue>Kidney</tissue>
    </source>
</reference>
<reference key="2">
    <citation type="journal article" date="2003" name="Nature">
        <title>The DNA sequence and analysis of human chromosome 6.</title>
        <authorList>
            <person name="Mungall A.J."/>
            <person name="Palmer S.A."/>
            <person name="Sims S.K."/>
            <person name="Edwards C.A."/>
            <person name="Ashurst J.L."/>
            <person name="Wilming L."/>
            <person name="Jones M.C."/>
            <person name="Horton R."/>
            <person name="Hunt S.E."/>
            <person name="Scott C.E."/>
            <person name="Gilbert J.G.R."/>
            <person name="Clamp M.E."/>
            <person name="Bethel G."/>
            <person name="Milne S."/>
            <person name="Ainscough R."/>
            <person name="Almeida J.P."/>
            <person name="Ambrose K.D."/>
            <person name="Andrews T.D."/>
            <person name="Ashwell R.I.S."/>
            <person name="Babbage A.K."/>
            <person name="Bagguley C.L."/>
            <person name="Bailey J."/>
            <person name="Banerjee R."/>
            <person name="Barker D.J."/>
            <person name="Barlow K.F."/>
            <person name="Bates K."/>
            <person name="Beare D.M."/>
            <person name="Beasley H."/>
            <person name="Beasley O."/>
            <person name="Bird C.P."/>
            <person name="Blakey S.E."/>
            <person name="Bray-Allen S."/>
            <person name="Brook J."/>
            <person name="Brown A.J."/>
            <person name="Brown J.Y."/>
            <person name="Burford D.C."/>
            <person name="Burrill W."/>
            <person name="Burton J."/>
            <person name="Carder C."/>
            <person name="Carter N.P."/>
            <person name="Chapman J.C."/>
            <person name="Clark S.Y."/>
            <person name="Clark G."/>
            <person name="Clee C.M."/>
            <person name="Clegg S."/>
            <person name="Cobley V."/>
            <person name="Collier R.E."/>
            <person name="Collins J.E."/>
            <person name="Colman L.K."/>
            <person name="Corby N.R."/>
            <person name="Coville G.J."/>
            <person name="Culley K.M."/>
            <person name="Dhami P."/>
            <person name="Davies J."/>
            <person name="Dunn M."/>
            <person name="Earthrowl M.E."/>
            <person name="Ellington A.E."/>
            <person name="Evans K.A."/>
            <person name="Faulkner L."/>
            <person name="Francis M.D."/>
            <person name="Frankish A."/>
            <person name="Frankland J."/>
            <person name="French L."/>
            <person name="Garner P."/>
            <person name="Garnett J."/>
            <person name="Ghori M.J."/>
            <person name="Gilby L.M."/>
            <person name="Gillson C.J."/>
            <person name="Glithero R.J."/>
            <person name="Grafham D.V."/>
            <person name="Grant M."/>
            <person name="Gribble S."/>
            <person name="Griffiths C."/>
            <person name="Griffiths M.N.D."/>
            <person name="Hall R."/>
            <person name="Halls K.S."/>
            <person name="Hammond S."/>
            <person name="Harley J.L."/>
            <person name="Hart E.A."/>
            <person name="Heath P.D."/>
            <person name="Heathcott R."/>
            <person name="Holmes S.J."/>
            <person name="Howden P.J."/>
            <person name="Howe K.L."/>
            <person name="Howell G.R."/>
            <person name="Huckle E."/>
            <person name="Humphray S.J."/>
            <person name="Humphries M.D."/>
            <person name="Hunt A.R."/>
            <person name="Johnson C.M."/>
            <person name="Joy A.A."/>
            <person name="Kay M."/>
            <person name="Keenan S.J."/>
            <person name="Kimberley A.M."/>
            <person name="King A."/>
            <person name="Laird G.K."/>
            <person name="Langford C."/>
            <person name="Lawlor S."/>
            <person name="Leongamornlert D.A."/>
            <person name="Leversha M."/>
            <person name="Lloyd C.R."/>
            <person name="Lloyd D.M."/>
            <person name="Loveland J.E."/>
            <person name="Lovell J."/>
            <person name="Martin S."/>
            <person name="Mashreghi-Mohammadi M."/>
            <person name="Maslen G.L."/>
            <person name="Matthews L."/>
            <person name="McCann O.T."/>
            <person name="McLaren S.J."/>
            <person name="McLay K."/>
            <person name="McMurray A."/>
            <person name="Moore M.J.F."/>
            <person name="Mullikin J.C."/>
            <person name="Niblett D."/>
            <person name="Nickerson T."/>
            <person name="Novik K.L."/>
            <person name="Oliver K."/>
            <person name="Overton-Larty E.K."/>
            <person name="Parker A."/>
            <person name="Patel R."/>
            <person name="Pearce A.V."/>
            <person name="Peck A.I."/>
            <person name="Phillimore B.J.C.T."/>
            <person name="Phillips S."/>
            <person name="Plumb R.W."/>
            <person name="Porter K.M."/>
            <person name="Ramsey Y."/>
            <person name="Ranby S.A."/>
            <person name="Rice C.M."/>
            <person name="Ross M.T."/>
            <person name="Searle S.M."/>
            <person name="Sehra H.K."/>
            <person name="Sheridan E."/>
            <person name="Skuce C.D."/>
            <person name="Smith S."/>
            <person name="Smith M."/>
            <person name="Spraggon L."/>
            <person name="Squares S.L."/>
            <person name="Steward C.A."/>
            <person name="Sycamore N."/>
            <person name="Tamlyn-Hall G."/>
            <person name="Tester J."/>
            <person name="Theaker A.J."/>
            <person name="Thomas D.W."/>
            <person name="Thorpe A."/>
            <person name="Tracey A."/>
            <person name="Tromans A."/>
            <person name="Tubby B."/>
            <person name="Wall M."/>
            <person name="Wallis J.M."/>
            <person name="West A.P."/>
            <person name="White S.S."/>
            <person name="Whitehead S.L."/>
            <person name="Whittaker H."/>
            <person name="Wild A."/>
            <person name="Willey D.J."/>
            <person name="Wilmer T.E."/>
            <person name="Wood J.M."/>
            <person name="Wray P.W."/>
            <person name="Wyatt J.C."/>
            <person name="Young L."/>
            <person name="Younger R.M."/>
            <person name="Bentley D.R."/>
            <person name="Coulson A."/>
            <person name="Durbin R.M."/>
            <person name="Hubbard T."/>
            <person name="Sulston J.E."/>
            <person name="Dunham I."/>
            <person name="Rogers J."/>
            <person name="Beck S."/>
        </authorList>
    </citation>
    <scope>NUCLEOTIDE SEQUENCE [LARGE SCALE GENOMIC DNA]</scope>
    <scope>VARIANTS LYS-42 AND ASN-45</scope>
</reference>
<reference key="3">
    <citation type="journal article" date="2004" name="Genome Res.">
        <title>The status, quality, and expansion of the NIH full-length cDNA project: the Mammalian Gene Collection (MGC).</title>
        <authorList>
            <consortium name="The MGC Project Team"/>
        </authorList>
    </citation>
    <scope>NUCLEOTIDE SEQUENCE [LARGE SCALE MRNA]</scope>
    <scope>VARIANT ASN-45</scope>
</reference>
<protein>
    <recommendedName>
        <fullName>Mitochondrial coiled-coil domain protein 1</fullName>
    </recommendedName>
</protein>
<evidence type="ECO:0000255" key="1"/>
<evidence type="ECO:0000256" key="2">
    <source>
        <dbReference type="SAM" id="MobiDB-lite"/>
    </source>
</evidence>
<evidence type="ECO:0000269" key="3">
    <source>
    </source>
</evidence>
<evidence type="ECO:0000269" key="4">
    <source>
    </source>
</evidence>
<evidence type="ECO:0000269" key="5">
    <source>
    </source>
</evidence>
<organism>
    <name type="scientific">Homo sapiens</name>
    <name type="common">Human</name>
    <dbReference type="NCBI Taxonomy" id="9606"/>
    <lineage>
        <taxon>Eukaryota</taxon>
        <taxon>Metazoa</taxon>
        <taxon>Chordata</taxon>
        <taxon>Craniata</taxon>
        <taxon>Vertebrata</taxon>
        <taxon>Euteleostomi</taxon>
        <taxon>Mammalia</taxon>
        <taxon>Eutheria</taxon>
        <taxon>Euarchontoglires</taxon>
        <taxon>Primates</taxon>
        <taxon>Haplorrhini</taxon>
        <taxon>Catarrhini</taxon>
        <taxon>Hominidae</taxon>
        <taxon>Homo</taxon>
    </lineage>
</organism>
<gene>
    <name type="primary">MCCD1</name>
</gene>
<dbReference type="EMBL" id="BN000141">
    <property type="protein sequence ID" value="CAD71139.1"/>
    <property type="molecule type" value="mRNA"/>
</dbReference>
<dbReference type="EMBL" id="BA000025">
    <property type="status" value="NOT_ANNOTATED_CDS"/>
    <property type="molecule type" value="Genomic_DNA"/>
</dbReference>
<dbReference type="EMBL" id="AL663061">
    <property type="status" value="NOT_ANNOTATED_CDS"/>
    <property type="molecule type" value="Genomic_DNA"/>
</dbReference>
<dbReference type="EMBL" id="AL662801">
    <property type="status" value="NOT_ANNOTATED_CDS"/>
    <property type="molecule type" value="Genomic_DNA"/>
</dbReference>
<dbReference type="EMBL" id="BX248516">
    <property type="status" value="NOT_ANNOTATED_CDS"/>
    <property type="molecule type" value="Genomic_DNA"/>
</dbReference>
<dbReference type="EMBL" id="BX682535">
    <property type="status" value="NOT_ANNOTATED_CDS"/>
    <property type="molecule type" value="Genomic_DNA"/>
</dbReference>
<dbReference type="EMBL" id="CR753864">
    <property type="status" value="NOT_ANNOTATED_CDS"/>
    <property type="molecule type" value="Genomic_DNA"/>
</dbReference>
<dbReference type="EMBL" id="CT009531">
    <property type="status" value="NOT_ANNOTATED_CDS"/>
    <property type="molecule type" value="Genomic_DNA"/>
</dbReference>
<dbReference type="EMBL" id="BC132994">
    <property type="protein sequence ID" value="AAI32995.1"/>
    <property type="molecule type" value="mRNA"/>
</dbReference>
<dbReference type="EMBL" id="BC132996">
    <property type="protein sequence ID" value="AAI32997.1"/>
    <property type="molecule type" value="mRNA"/>
</dbReference>
<dbReference type="CCDS" id="CCDS34396.1"/>
<dbReference type="RefSeq" id="NP_001011700.2">
    <property type="nucleotide sequence ID" value="NM_001011700.3"/>
</dbReference>
<dbReference type="SMR" id="P59942"/>
<dbReference type="BioGRID" id="134995">
    <property type="interactions" value="34"/>
</dbReference>
<dbReference type="FunCoup" id="P59942">
    <property type="interactions" value="8"/>
</dbReference>
<dbReference type="IntAct" id="P59942">
    <property type="interactions" value="30"/>
</dbReference>
<dbReference type="STRING" id="9606.ENSP00000365362"/>
<dbReference type="GlyGen" id="P59942">
    <property type="glycosylation" value="1 site, 1 O-linked glycan (1 site)"/>
</dbReference>
<dbReference type="BioMuta" id="MCCD1"/>
<dbReference type="DMDM" id="327478572"/>
<dbReference type="MassIVE" id="P59942"/>
<dbReference type="PaxDb" id="9606-ENSP00000365362"/>
<dbReference type="PeptideAtlas" id="P59942"/>
<dbReference type="Antibodypedia" id="48824">
    <property type="antibodies" value="7 antibodies from 6 providers"/>
</dbReference>
<dbReference type="DNASU" id="401250"/>
<dbReference type="Ensembl" id="ENST00000376191.3">
    <property type="protein sequence ID" value="ENSP00000365362.2"/>
    <property type="gene ID" value="ENSG00000204511.3"/>
</dbReference>
<dbReference type="Ensembl" id="ENST00000383512.2">
    <property type="protein sequence ID" value="ENSP00000373004.2"/>
    <property type="gene ID" value="ENSG00000206447.2"/>
</dbReference>
<dbReference type="Ensembl" id="ENST00000421209.2">
    <property type="protein sequence ID" value="ENSP00000389666.2"/>
    <property type="gene ID" value="ENSG00000226923.2"/>
</dbReference>
<dbReference type="Ensembl" id="ENST00000422733.2">
    <property type="protein sequence ID" value="ENSP00000407020.2"/>
    <property type="gene ID" value="ENSG00000226841.2"/>
</dbReference>
<dbReference type="Ensembl" id="ENST00000424816.2">
    <property type="protein sequence ID" value="ENSP00000399197.2"/>
    <property type="gene ID" value="ENSG00000225228.2"/>
</dbReference>
<dbReference type="Ensembl" id="ENST00000430073.2">
    <property type="protein sequence ID" value="ENSP00000407581.2"/>
    <property type="gene ID" value="ENSG00000228662.2"/>
</dbReference>
<dbReference type="Ensembl" id="ENST00000443405.2">
    <property type="protein sequence ID" value="ENSP00000402555.2"/>
    <property type="gene ID" value="ENSG00000238238.2"/>
</dbReference>
<dbReference type="Ensembl" id="ENST00000452195.2">
    <property type="protein sequence ID" value="ENSP00000392250.2"/>
    <property type="gene ID" value="ENSG00000231975.2"/>
</dbReference>
<dbReference type="GeneID" id="401250"/>
<dbReference type="KEGG" id="hsa:401250"/>
<dbReference type="MANE-Select" id="ENST00000376191.3">
    <property type="protein sequence ID" value="ENSP00000365362.2"/>
    <property type="RefSeq nucleotide sequence ID" value="NM_001011700.3"/>
    <property type="RefSeq protein sequence ID" value="NP_001011700.2"/>
</dbReference>
<dbReference type="UCSC" id="uc003ntp.2">
    <property type="organism name" value="human"/>
</dbReference>
<dbReference type="AGR" id="HGNC:20668"/>
<dbReference type="CTD" id="401250"/>
<dbReference type="DisGeNET" id="401250"/>
<dbReference type="GeneCards" id="MCCD1"/>
<dbReference type="HGNC" id="HGNC:20668">
    <property type="gene designation" value="MCCD1"/>
</dbReference>
<dbReference type="HPA" id="ENSG00000204511">
    <property type="expression patterns" value="Tissue enriched (kidney)"/>
</dbReference>
<dbReference type="MIM" id="609624">
    <property type="type" value="gene"/>
</dbReference>
<dbReference type="neXtProt" id="NX_P59942"/>
<dbReference type="OpenTargets" id="ENSG00000204511"/>
<dbReference type="PharmGKB" id="PA134913652"/>
<dbReference type="VEuPathDB" id="HostDB:ENSG00000204511"/>
<dbReference type="eggNOG" id="ENOG502TDVX">
    <property type="taxonomic scope" value="Eukaryota"/>
</dbReference>
<dbReference type="GeneTree" id="ENSGT00390000014268"/>
<dbReference type="HOGENOM" id="CLU_2249255_0_0_1"/>
<dbReference type="InParanoid" id="P59942"/>
<dbReference type="OMA" id="GSWRCCS"/>
<dbReference type="OrthoDB" id="9806603at2759"/>
<dbReference type="PAN-GO" id="P59942">
    <property type="GO annotations" value="0 GO annotations based on evolutionary models"/>
</dbReference>
<dbReference type="PhylomeDB" id="P59942"/>
<dbReference type="TreeFam" id="TF340465"/>
<dbReference type="PathwayCommons" id="P59942"/>
<dbReference type="SignaLink" id="P59942"/>
<dbReference type="BioGRID-ORCS" id="401250">
    <property type="hits" value="16 hits in 1137 CRISPR screens"/>
</dbReference>
<dbReference type="GenomeRNAi" id="401250"/>
<dbReference type="Pharos" id="P59942">
    <property type="development level" value="Tdark"/>
</dbReference>
<dbReference type="PRO" id="PR:P59942"/>
<dbReference type="Proteomes" id="UP000005640">
    <property type="component" value="Chromosome 6"/>
</dbReference>
<dbReference type="RNAct" id="P59942">
    <property type="molecule type" value="protein"/>
</dbReference>
<dbReference type="Bgee" id="ENSG00000204511">
    <property type="expression patterns" value="Expressed in adult mammalian kidney and 50 other cell types or tissues"/>
</dbReference>
<dbReference type="ExpressionAtlas" id="P59942">
    <property type="expression patterns" value="baseline and differential"/>
</dbReference>
<dbReference type="GO" id="GO:0005739">
    <property type="term" value="C:mitochondrion"/>
    <property type="evidence" value="ECO:0006056"/>
    <property type="project" value="FlyBase"/>
</dbReference>
<dbReference type="InterPro" id="IPR031438">
    <property type="entry name" value="MCCD1"/>
</dbReference>
<dbReference type="PANTHER" id="PTHR37877">
    <property type="entry name" value="MITOCHONDRIAL COILED-COIL DOMAIN PROTEIN 1"/>
    <property type="match status" value="1"/>
</dbReference>
<dbReference type="PANTHER" id="PTHR37877:SF1">
    <property type="entry name" value="MITOCHONDRIAL COILED-COIL DOMAIN PROTEIN 1"/>
    <property type="match status" value="1"/>
</dbReference>
<dbReference type="Pfam" id="PF15707">
    <property type="entry name" value="MCCD1"/>
    <property type="match status" value="1"/>
</dbReference>
<name>MCCD1_HUMAN</name>
<sequence>MVLPLPWLSRYHFLRLLLPSWSLAPQGSHGCCSQNPKASMEEQTSSRGNGKMTSPPRGPGTHRTAELARAEELLEQQLELYQALLEGQEGAWEAQALVLKIQKLKEQMRRHQESLGGGA</sequence>